<comment type="function">
    <text evidence="1">One of two assembly initiator proteins, it binds directly to the 5'-end of the 23S rRNA, where it nucleates assembly of the 50S subunit.</text>
</comment>
<comment type="function">
    <text evidence="1">One of the proteins that surrounds the polypeptide exit tunnel on the outside of the subunit.</text>
</comment>
<comment type="subunit">
    <text evidence="1">Part of the 50S ribosomal subunit.</text>
</comment>
<comment type="similarity">
    <text evidence="1">Belongs to the universal ribosomal protein uL24 family.</text>
</comment>
<feature type="chain" id="PRO_1000052279" description="Large ribosomal subunit protein uL24">
    <location>
        <begin position="1"/>
        <end position="104"/>
    </location>
</feature>
<accession>Q1IFV5</accession>
<name>RL24_PSEE4</name>
<organism>
    <name type="scientific">Pseudomonas entomophila (strain L48)</name>
    <dbReference type="NCBI Taxonomy" id="384676"/>
    <lineage>
        <taxon>Bacteria</taxon>
        <taxon>Pseudomonadati</taxon>
        <taxon>Pseudomonadota</taxon>
        <taxon>Gammaproteobacteria</taxon>
        <taxon>Pseudomonadales</taxon>
        <taxon>Pseudomonadaceae</taxon>
        <taxon>Pseudomonas</taxon>
    </lineage>
</organism>
<sequence>MQKIRRDDEIIVIAGKDKGKRGKVLKVLADDRLVIGGVNLVKRHTKPNPMAGVQGGIVEKEAPLHASNVAIFNGETNKADRVGFKVEDGKKIRVFKSTQKAVDA</sequence>
<dbReference type="EMBL" id="CT573326">
    <property type="protein sequence ID" value="CAK13447.1"/>
    <property type="molecule type" value="Genomic_DNA"/>
</dbReference>
<dbReference type="RefSeq" id="WP_003255476.1">
    <property type="nucleotide sequence ID" value="NC_008027.1"/>
</dbReference>
<dbReference type="SMR" id="Q1IFV5"/>
<dbReference type="STRING" id="384676.PSEEN0501"/>
<dbReference type="GeneID" id="93443971"/>
<dbReference type="KEGG" id="pen:PSEEN0501"/>
<dbReference type="eggNOG" id="COG0198">
    <property type="taxonomic scope" value="Bacteria"/>
</dbReference>
<dbReference type="HOGENOM" id="CLU_093315_2_2_6"/>
<dbReference type="OrthoDB" id="9807419at2"/>
<dbReference type="Proteomes" id="UP000000658">
    <property type="component" value="Chromosome"/>
</dbReference>
<dbReference type="GO" id="GO:1990904">
    <property type="term" value="C:ribonucleoprotein complex"/>
    <property type="evidence" value="ECO:0007669"/>
    <property type="project" value="UniProtKB-KW"/>
</dbReference>
<dbReference type="GO" id="GO:0005840">
    <property type="term" value="C:ribosome"/>
    <property type="evidence" value="ECO:0007669"/>
    <property type="project" value="UniProtKB-KW"/>
</dbReference>
<dbReference type="GO" id="GO:0019843">
    <property type="term" value="F:rRNA binding"/>
    <property type="evidence" value="ECO:0007669"/>
    <property type="project" value="UniProtKB-UniRule"/>
</dbReference>
<dbReference type="GO" id="GO:0003735">
    <property type="term" value="F:structural constituent of ribosome"/>
    <property type="evidence" value="ECO:0007669"/>
    <property type="project" value="InterPro"/>
</dbReference>
<dbReference type="GO" id="GO:0006412">
    <property type="term" value="P:translation"/>
    <property type="evidence" value="ECO:0007669"/>
    <property type="project" value="UniProtKB-UniRule"/>
</dbReference>
<dbReference type="CDD" id="cd06089">
    <property type="entry name" value="KOW_RPL26"/>
    <property type="match status" value="1"/>
</dbReference>
<dbReference type="FunFam" id="2.30.30.30:FF:000004">
    <property type="entry name" value="50S ribosomal protein L24"/>
    <property type="match status" value="1"/>
</dbReference>
<dbReference type="Gene3D" id="2.30.30.30">
    <property type="match status" value="1"/>
</dbReference>
<dbReference type="HAMAP" id="MF_01326_B">
    <property type="entry name" value="Ribosomal_uL24_B"/>
    <property type="match status" value="1"/>
</dbReference>
<dbReference type="InterPro" id="IPR005824">
    <property type="entry name" value="KOW"/>
</dbReference>
<dbReference type="InterPro" id="IPR014722">
    <property type="entry name" value="Rib_uL2_dom2"/>
</dbReference>
<dbReference type="InterPro" id="IPR003256">
    <property type="entry name" value="Ribosomal_uL24"/>
</dbReference>
<dbReference type="InterPro" id="IPR005825">
    <property type="entry name" value="Ribosomal_uL24_CS"/>
</dbReference>
<dbReference type="InterPro" id="IPR041988">
    <property type="entry name" value="Ribosomal_uL24_KOW"/>
</dbReference>
<dbReference type="InterPro" id="IPR008991">
    <property type="entry name" value="Translation_prot_SH3-like_sf"/>
</dbReference>
<dbReference type="NCBIfam" id="TIGR01079">
    <property type="entry name" value="rplX_bact"/>
    <property type="match status" value="1"/>
</dbReference>
<dbReference type="PANTHER" id="PTHR12903">
    <property type="entry name" value="MITOCHONDRIAL RIBOSOMAL PROTEIN L24"/>
    <property type="match status" value="1"/>
</dbReference>
<dbReference type="Pfam" id="PF00467">
    <property type="entry name" value="KOW"/>
    <property type="match status" value="1"/>
</dbReference>
<dbReference type="Pfam" id="PF17136">
    <property type="entry name" value="ribosomal_L24"/>
    <property type="match status" value="1"/>
</dbReference>
<dbReference type="SMART" id="SM00739">
    <property type="entry name" value="KOW"/>
    <property type="match status" value="1"/>
</dbReference>
<dbReference type="SUPFAM" id="SSF50104">
    <property type="entry name" value="Translation proteins SH3-like domain"/>
    <property type="match status" value="1"/>
</dbReference>
<dbReference type="PROSITE" id="PS01108">
    <property type="entry name" value="RIBOSOMAL_L24"/>
    <property type="match status" value="1"/>
</dbReference>
<gene>
    <name evidence="1" type="primary">rplX</name>
    <name type="ordered locus">PSEEN0501</name>
</gene>
<evidence type="ECO:0000255" key="1">
    <source>
        <dbReference type="HAMAP-Rule" id="MF_01326"/>
    </source>
</evidence>
<evidence type="ECO:0000305" key="2"/>
<keyword id="KW-0687">Ribonucleoprotein</keyword>
<keyword id="KW-0689">Ribosomal protein</keyword>
<keyword id="KW-0694">RNA-binding</keyword>
<keyword id="KW-0699">rRNA-binding</keyword>
<proteinExistence type="inferred from homology"/>
<protein>
    <recommendedName>
        <fullName evidence="1">Large ribosomal subunit protein uL24</fullName>
    </recommendedName>
    <alternativeName>
        <fullName evidence="2">50S ribosomal protein L24</fullName>
    </alternativeName>
</protein>
<reference key="1">
    <citation type="journal article" date="2006" name="Nat. Biotechnol.">
        <title>Complete genome sequence of the entomopathogenic and metabolically versatile soil bacterium Pseudomonas entomophila.</title>
        <authorList>
            <person name="Vodovar N."/>
            <person name="Vallenet D."/>
            <person name="Cruveiller S."/>
            <person name="Rouy Z."/>
            <person name="Barbe V."/>
            <person name="Acosta C."/>
            <person name="Cattolico L."/>
            <person name="Jubin C."/>
            <person name="Lajus A."/>
            <person name="Segurens B."/>
            <person name="Vacherie B."/>
            <person name="Wincker P."/>
            <person name="Weissenbach J."/>
            <person name="Lemaitre B."/>
            <person name="Medigue C."/>
            <person name="Boccard F."/>
        </authorList>
    </citation>
    <scope>NUCLEOTIDE SEQUENCE [LARGE SCALE GENOMIC DNA]</scope>
    <source>
        <strain>L48</strain>
    </source>
</reference>